<keyword id="KW-0028">Amino-acid biosynthesis</keyword>
<keyword id="KW-0479">Metal-binding</keyword>
<keyword id="KW-0486">Methionine biosynthesis</keyword>
<keyword id="KW-0489">Methyltransferase</keyword>
<keyword id="KW-1185">Reference proteome</keyword>
<keyword id="KW-0677">Repeat</keyword>
<keyword id="KW-0808">Transferase</keyword>
<keyword id="KW-0862">Zinc</keyword>
<protein>
    <recommendedName>
        <fullName evidence="1">5-methyltetrahydropteroyltriglutamate--homocysteine methyltransferase</fullName>
        <ecNumber evidence="1">2.1.1.14</ecNumber>
    </recommendedName>
    <alternativeName>
        <fullName evidence="1">Cobalamin-independent methionine synthase</fullName>
    </alternativeName>
    <alternativeName>
        <fullName evidence="1">Methionine synthase, vitamin-B12 independent isozyme</fullName>
    </alternativeName>
</protein>
<gene>
    <name evidence="1" type="primary">metE</name>
    <name type="ordered locus">SAG2049</name>
</gene>
<accession>P65345</accession>
<accession>Q8DX10</accession>
<accession>Q8E2V9</accession>
<evidence type="ECO:0000255" key="1">
    <source>
        <dbReference type="HAMAP-Rule" id="MF_00172"/>
    </source>
</evidence>
<reference key="1">
    <citation type="journal article" date="2002" name="Proc. Natl. Acad. Sci. U.S.A.">
        <title>Complete genome sequence and comparative genomic analysis of an emerging human pathogen, serotype V Streptococcus agalactiae.</title>
        <authorList>
            <person name="Tettelin H."/>
            <person name="Masignani V."/>
            <person name="Cieslewicz M.J."/>
            <person name="Eisen J.A."/>
            <person name="Peterson S.N."/>
            <person name="Wessels M.R."/>
            <person name="Paulsen I.T."/>
            <person name="Nelson K.E."/>
            <person name="Margarit I."/>
            <person name="Read T.D."/>
            <person name="Madoff L.C."/>
            <person name="Wolf A.M."/>
            <person name="Beanan M.J."/>
            <person name="Brinkac L.M."/>
            <person name="Daugherty S.C."/>
            <person name="DeBoy R.T."/>
            <person name="Durkin A.S."/>
            <person name="Kolonay J.F."/>
            <person name="Madupu R."/>
            <person name="Lewis M.R."/>
            <person name="Radune D."/>
            <person name="Fedorova N.B."/>
            <person name="Scanlan D."/>
            <person name="Khouri H.M."/>
            <person name="Mulligan S."/>
            <person name="Carty H.A."/>
            <person name="Cline R.T."/>
            <person name="Van Aken S.E."/>
            <person name="Gill J."/>
            <person name="Scarselli M."/>
            <person name="Mora M."/>
            <person name="Iacobini E.T."/>
            <person name="Brettoni C."/>
            <person name="Galli G."/>
            <person name="Mariani M."/>
            <person name="Vegni F."/>
            <person name="Maione D."/>
            <person name="Rinaudo D."/>
            <person name="Rappuoli R."/>
            <person name="Telford J.L."/>
            <person name="Kasper D.L."/>
            <person name="Grandi G."/>
            <person name="Fraser C.M."/>
        </authorList>
    </citation>
    <scope>NUCLEOTIDE SEQUENCE [LARGE SCALE GENOMIC DNA]</scope>
    <source>
        <strain>ATCC BAA-611 / 2603 V/R</strain>
    </source>
</reference>
<sequence length="745" mass="84647">MVKVSNLGYPRLGEQREWKQAIEAFWAGNLEQKDLEKQLKQLRINHLKKQKEAGIDLIPVGDFSCYDHVLDLSFQFNVIPKRFDEYERNLDLYFAIARGDKDNVASSMKKWFNTNYHYIVPEWEVETKPHLQNNYLLDLYLEAREVVGDKAKPVITGPITYVSLSSGIVDFEATVQRLLPLYKQVFQDLIDAGATYIQIDEPIFVTDEGELLVDIAKSVYDFFAREVPQAHFIFQTYFESAVCLDKLSKLPVTGFGLDFIHGRAENLAAVKQGLFREKELFAGIVNGRNIWAVNLEETLALLEEIGPFVKRLTLQPSSSLLHVPVTTKYETHLDPVLKNGLSFADEKLKELELLASAFDGNKTKGYHEALSRFSALQAADFRHVALESLAEVKLERSPYKLRQALQAEKLQLPILPTTTIGSFPQSPEIRKKRLAWKRGNLSDSDYKDFIKTEIRRWIAIQEDLDLDVLVHGEFERVDMVEFFGQKLAGFTTTKLGWVQSYGSRAVKPPIIYGDVKHIQPLSLEETVYAQSLTKKPVKGMLTGPITITNWSFERDDISRSDLFNQIALAIKDEIQLLEQSGIAIIQVDEAALREGLPLRQQKQQAYLDDAVAAFKIATSSVKDETQIHTHMCYSKFDEIIDSIRALDADVISIETSRSHGDIIESFETAVYPLGIGLGVYDIHSPRIPTKEEIIVNIQRSLKCLSKEQFWVNPDCGLKTRREAETIAALEVLVSATKEVRQQLDN</sequence>
<comment type="function">
    <text evidence="1">Catalyzes the transfer of a methyl group from 5-methyltetrahydrofolate to homocysteine resulting in methionine formation.</text>
</comment>
<comment type="catalytic activity">
    <reaction evidence="1">
        <text>5-methyltetrahydropteroyltri-L-glutamate + L-homocysteine = tetrahydropteroyltri-L-glutamate + L-methionine</text>
        <dbReference type="Rhea" id="RHEA:21196"/>
        <dbReference type="ChEBI" id="CHEBI:57844"/>
        <dbReference type="ChEBI" id="CHEBI:58140"/>
        <dbReference type="ChEBI" id="CHEBI:58199"/>
        <dbReference type="ChEBI" id="CHEBI:58207"/>
        <dbReference type="EC" id="2.1.1.14"/>
    </reaction>
</comment>
<comment type="cofactor">
    <cofactor evidence="1">
        <name>Zn(2+)</name>
        <dbReference type="ChEBI" id="CHEBI:29105"/>
    </cofactor>
    <text evidence="1">Binds 1 zinc ion per subunit.</text>
</comment>
<comment type="pathway">
    <text evidence="1">Amino-acid biosynthesis; L-methionine biosynthesis via de novo pathway; L-methionine from L-homocysteine (MetE route): step 1/1.</text>
</comment>
<comment type="similarity">
    <text evidence="1">Belongs to the vitamin-B12 independent methionine synthase family.</text>
</comment>
<dbReference type="EC" id="2.1.1.14" evidence="1"/>
<dbReference type="EMBL" id="AE009948">
    <property type="protein sequence ID" value="AAN00908.1"/>
    <property type="molecule type" value="Genomic_DNA"/>
</dbReference>
<dbReference type="RefSeq" id="NP_689035.1">
    <property type="nucleotide sequence ID" value="NC_004116.1"/>
</dbReference>
<dbReference type="RefSeq" id="WP_000241563.1">
    <property type="nucleotide sequence ID" value="NC_004116.1"/>
</dbReference>
<dbReference type="SMR" id="P65345"/>
<dbReference type="STRING" id="208435.SAG2049"/>
<dbReference type="KEGG" id="sag:SAG2049"/>
<dbReference type="PATRIC" id="fig|208435.3.peg.2052"/>
<dbReference type="HOGENOM" id="CLU_013175_0_0_9"/>
<dbReference type="OrthoDB" id="244285at2"/>
<dbReference type="UniPathway" id="UPA00051">
    <property type="reaction ID" value="UER00082"/>
</dbReference>
<dbReference type="Proteomes" id="UP000000821">
    <property type="component" value="Chromosome"/>
</dbReference>
<dbReference type="GO" id="GO:0003871">
    <property type="term" value="F:5-methyltetrahydropteroyltriglutamate-homocysteine S-methyltransferase activity"/>
    <property type="evidence" value="ECO:0007669"/>
    <property type="project" value="UniProtKB-UniRule"/>
</dbReference>
<dbReference type="GO" id="GO:0008270">
    <property type="term" value="F:zinc ion binding"/>
    <property type="evidence" value="ECO:0007669"/>
    <property type="project" value="InterPro"/>
</dbReference>
<dbReference type="GO" id="GO:0009086">
    <property type="term" value="P:methionine biosynthetic process"/>
    <property type="evidence" value="ECO:0007669"/>
    <property type="project" value="UniProtKB-UniRule"/>
</dbReference>
<dbReference type="GO" id="GO:0032259">
    <property type="term" value="P:methylation"/>
    <property type="evidence" value="ECO:0007669"/>
    <property type="project" value="UniProtKB-KW"/>
</dbReference>
<dbReference type="CDD" id="cd03311">
    <property type="entry name" value="CIMS_C_terminal_like"/>
    <property type="match status" value="1"/>
</dbReference>
<dbReference type="CDD" id="cd03312">
    <property type="entry name" value="CIMS_N_terminal_like"/>
    <property type="match status" value="1"/>
</dbReference>
<dbReference type="Gene3D" id="3.20.20.210">
    <property type="match status" value="2"/>
</dbReference>
<dbReference type="HAMAP" id="MF_00172">
    <property type="entry name" value="Meth_synth"/>
    <property type="match status" value="1"/>
</dbReference>
<dbReference type="InterPro" id="IPR013215">
    <property type="entry name" value="Cbl-indep_Met_Synth_N"/>
</dbReference>
<dbReference type="InterPro" id="IPR006276">
    <property type="entry name" value="Cobalamin-indep_Met_synthase"/>
</dbReference>
<dbReference type="InterPro" id="IPR002629">
    <property type="entry name" value="Met_Synth_C/arc"/>
</dbReference>
<dbReference type="InterPro" id="IPR038071">
    <property type="entry name" value="UROD/MetE-like_sf"/>
</dbReference>
<dbReference type="NCBIfam" id="TIGR01371">
    <property type="entry name" value="met_syn_B12ind"/>
    <property type="match status" value="1"/>
</dbReference>
<dbReference type="NCBIfam" id="NF003556">
    <property type="entry name" value="PRK05222.1"/>
    <property type="match status" value="1"/>
</dbReference>
<dbReference type="PANTHER" id="PTHR30519">
    <property type="entry name" value="5-METHYLTETRAHYDROPTEROYLTRIGLUTAMATE--HOMOCYSTEINE METHYLTRANSFERASE"/>
    <property type="match status" value="1"/>
</dbReference>
<dbReference type="Pfam" id="PF08267">
    <property type="entry name" value="Meth_synt_1"/>
    <property type="match status" value="1"/>
</dbReference>
<dbReference type="Pfam" id="PF01717">
    <property type="entry name" value="Meth_synt_2"/>
    <property type="match status" value="1"/>
</dbReference>
<dbReference type="PIRSF" id="PIRSF000382">
    <property type="entry name" value="MeTrfase_B12_ind"/>
    <property type="match status" value="1"/>
</dbReference>
<dbReference type="SUPFAM" id="SSF51726">
    <property type="entry name" value="UROD/MetE-like"/>
    <property type="match status" value="2"/>
</dbReference>
<proteinExistence type="inferred from homology"/>
<feature type="chain" id="PRO_0000098667" description="5-methyltetrahydropteroyltriglutamate--homocysteine methyltransferase">
    <location>
        <begin position="1"/>
        <end position="745"/>
    </location>
</feature>
<feature type="active site" description="Proton donor" evidence="1">
    <location>
        <position position="683"/>
    </location>
</feature>
<feature type="binding site" evidence="1">
    <location>
        <begin position="16"/>
        <end position="19"/>
    </location>
    <ligand>
        <name>5-methyltetrahydropteroyltri-L-glutamate</name>
        <dbReference type="ChEBI" id="CHEBI:58207"/>
    </ligand>
</feature>
<feature type="binding site" evidence="1">
    <location>
        <position position="110"/>
    </location>
    <ligand>
        <name>5-methyltetrahydropteroyltri-L-glutamate</name>
        <dbReference type="ChEBI" id="CHEBI:58207"/>
    </ligand>
</feature>
<feature type="binding site" evidence="1">
    <location>
        <begin position="420"/>
        <end position="422"/>
    </location>
    <ligand>
        <name>L-homocysteine</name>
        <dbReference type="ChEBI" id="CHEBI:58199"/>
    </ligand>
</feature>
<feature type="binding site" evidence="1">
    <location>
        <begin position="420"/>
        <end position="422"/>
    </location>
    <ligand>
        <name>L-methionine</name>
        <dbReference type="ChEBI" id="CHEBI:57844"/>
    </ligand>
</feature>
<feature type="binding site" evidence="1">
    <location>
        <position position="473"/>
    </location>
    <ligand>
        <name>L-homocysteine</name>
        <dbReference type="ChEBI" id="CHEBI:58199"/>
    </ligand>
</feature>
<feature type="binding site" evidence="1">
    <location>
        <position position="473"/>
    </location>
    <ligand>
        <name>L-methionine</name>
        <dbReference type="ChEBI" id="CHEBI:57844"/>
    </ligand>
</feature>
<feature type="binding site" evidence="1">
    <location>
        <position position="550"/>
    </location>
    <ligand>
        <name>5-methyltetrahydropteroyltri-L-glutamate</name>
        <dbReference type="ChEBI" id="CHEBI:58207"/>
    </ligand>
</feature>
<feature type="binding site" evidence="1">
    <location>
        <position position="588"/>
    </location>
    <ligand>
        <name>L-homocysteine</name>
        <dbReference type="ChEBI" id="CHEBI:58199"/>
    </ligand>
</feature>
<feature type="binding site" evidence="1">
    <location>
        <position position="588"/>
    </location>
    <ligand>
        <name>L-methionine</name>
        <dbReference type="ChEBI" id="CHEBI:57844"/>
    </ligand>
</feature>
<feature type="binding site" evidence="1">
    <location>
        <position position="594"/>
    </location>
    <ligand>
        <name>5-methyltetrahydropteroyltri-L-glutamate</name>
        <dbReference type="ChEBI" id="CHEBI:58207"/>
    </ligand>
</feature>
<feature type="binding site" evidence="1">
    <location>
        <position position="630"/>
    </location>
    <ligand>
        <name>Zn(2+)</name>
        <dbReference type="ChEBI" id="CHEBI:29105"/>
        <note>catalytic</note>
    </ligand>
</feature>
<feature type="binding site" evidence="1">
    <location>
        <position position="632"/>
    </location>
    <ligand>
        <name>Zn(2+)</name>
        <dbReference type="ChEBI" id="CHEBI:29105"/>
        <note>catalytic</note>
    </ligand>
</feature>
<feature type="binding site" evidence="1">
    <location>
        <position position="654"/>
    </location>
    <ligand>
        <name>Zn(2+)</name>
        <dbReference type="ChEBI" id="CHEBI:29105"/>
        <note>catalytic</note>
    </ligand>
</feature>
<feature type="binding site" evidence="1">
    <location>
        <position position="715"/>
    </location>
    <ligand>
        <name>Zn(2+)</name>
        <dbReference type="ChEBI" id="CHEBI:29105"/>
        <note>catalytic</note>
    </ligand>
</feature>
<name>METE_STRA5</name>
<organism>
    <name type="scientific">Streptococcus agalactiae serotype V (strain ATCC BAA-611 / 2603 V/R)</name>
    <dbReference type="NCBI Taxonomy" id="208435"/>
    <lineage>
        <taxon>Bacteria</taxon>
        <taxon>Bacillati</taxon>
        <taxon>Bacillota</taxon>
        <taxon>Bacilli</taxon>
        <taxon>Lactobacillales</taxon>
        <taxon>Streptococcaceae</taxon>
        <taxon>Streptococcus</taxon>
    </lineage>
</organism>